<comment type="function">
    <text evidence="1">3'-to-5' exoribonuclease specific for small oligoribonucleotides.</text>
</comment>
<comment type="subcellular location">
    <subcellularLocation>
        <location evidence="1">Cytoplasm</location>
    </subcellularLocation>
</comment>
<comment type="similarity">
    <text evidence="1">Belongs to the oligoribonuclease family.</text>
</comment>
<accession>A1UJ99</accession>
<proteinExistence type="inferred from homology"/>
<name>ORN_MYCSK</name>
<gene>
    <name evidence="1" type="primary">orn</name>
    <name type="ordered locus">Mkms_3713</name>
</gene>
<organism>
    <name type="scientific">Mycobacterium sp. (strain KMS)</name>
    <dbReference type="NCBI Taxonomy" id="189918"/>
    <lineage>
        <taxon>Bacteria</taxon>
        <taxon>Bacillati</taxon>
        <taxon>Actinomycetota</taxon>
        <taxon>Actinomycetes</taxon>
        <taxon>Mycobacteriales</taxon>
        <taxon>Mycobacteriaceae</taxon>
        <taxon>Mycobacterium</taxon>
    </lineage>
</organism>
<feature type="chain" id="PRO_1000004263" description="Oligoribonuclease">
    <location>
        <begin position="1"/>
        <end position="215"/>
    </location>
</feature>
<feature type="domain" description="Exonuclease" evidence="1">
    <location>
        <begin position="5"/>
        <end position="170"/>
    </location>
</feature>
<feature type="region of interest" description="Disordered" evidence="2">
    <location>
        <begin position="196"/>
        <end position="215"/>
    </location>
</feature>
<feature type="active site" evidence="1">
    <location>
        <position position="127"/>
    </location>
</feature>
<reference key="1">
    <citation type="submission" date="2006-12" db="EMBL/GenBank/DDBJ databases">
        <title>Complete sequence of chromosome of Mycobacterium sp. KMS.</title>
        <authorList>
            <consortium name="US DOE Joint Genome Institute"/>
            <person name="Copeland A."/>
            <person name="Lucas S."/>
            <person name="Lapidus A."/>
            <person name="Barry K."/>
            <person name="Detter J.C."/>
            <person name="Glavina del Rio T."/>
            <person name="Hammon N."/>
            <person name="Israni S."/>
            <person name="Dalin E."/>
            <person name="Tice H."/>
            <person name="Pitluck S."/>
            <person name="Kiss H."/>
            <person name="Brettin T."/>
            <person name="Bruce D."/>
            <person name="Han C."/>
            <person name="Tapia R."/>
            <person name="Gilna P."/>
            <person name="Schmutz J."/>
            <person name="Larimer F."/>
            <person name="Land M."/>
            <person name="Hauser L."/>
            <person name="Kyrpides N."/>
            <person name="Mikhailova N."/>
            <person name="Miller C.D."/>
            <person name="Richardson P."/>
        </authorList>
    </citation>
    <scope>NUCLEOTIDE SEQUENCE [LARGE SCALE GENOMIC DNA]</scope>
    <source>
        <strain>KMS</strain>
    </source>
</reference>
<protein>
    <recommendedName>
        <fullName evidence="1">Oligoribonuclease</fullName>
        <ecNumber evidence="1">3.1.15.-</ecNumber>
    </recommendedName>
</protein>
<dbReference type="EC" id="3.1.15.-" evidence="1"/>
<dbReference type="EMBL" id="CP000518">
    <property type="protein sequence ID" value="ABL92907.1"/>
    <property type="molecule type" value="Genomic_DNA"/>
</dbReference>
<dbReference type="SMR" id="A1UJ99"/>
<dbReference type="STRING" id="189918.Mkms_3713"/>
<dbReference type="KEGG" id="mkm:Mkms_3713"/>
<dbReference type="HOGENOM" id="CLU_064761_3_0_11"/>
<dbReference type="OrthoDB" id="9801329at2"/>
<dbReference type="GO" id="GO:0005737">
    <property type="term" value="C:cytoplasm"/>
    <property type="evidence" value="ECO:0007669"/>
    <property type="project" value="UniProtKB-SubCell"/>
</dbReference>
<dbReference type="GO" id="GO:0000175">
    <property type="term" value="F:3'-5'-RNA exonuclease activity"/>
    <property type="evidence" value="ECO:0007669"/>
    <property type="project" value="InterPro"/>
</dbReference>
<dbReference type="GO" id="GO:0003676">
    <property type="term" value="F:nucleic acid binding"/>
    <property type="evidence" value="ECO:0007669"/>
    <property type="project" value="InterPro"/>
</dbReference>
<dbReference type="CDD" id="cd06135">
    <property type="entry name" value="Orn"/>
    <property type="match status" value="1"/>
</dbReference>
<dbReference type="FunFam" id="3.30.420.10:FF:000003">
    <property type="entry name" value="Oligoribonuclease"/>
    <property type="match status" value="1"/>
</dbReference>
<dbReference type="Gene3D" id="3.30.420.10">
    <property type="entry name" value="Ribonuclease H-like superfamily/Ribonuclease H"/>
    <property type="match status" value="1"/>
</dbReference>
<dbReference type="HAMAP" id="MF_00045">
    <property type="entry name" value="Oligoribonuclease"/>
    <property type="match status" value="1"/>
</dbReference>
<dbReference type="InterPro" id="IPR013520">
    <property type="entry name" value="Exonuclease_RNaseT/DNA_pol3"/>
</dbReference>
<dbReference type="InterPro" id="IPR022894">
    <property type="entry name" value="Oligoribonuclease"/>
</dbReference>
<dbReference type="InterPro" id="IPR012337">
    <property type="entry name" value="RNaseH-like_sf"/>
</dbReference>
<dbReference type="InterPro" id="IPR036397">
    <property type="entry name" value="RNaseH_sf"/>
</dbReference>
<dbReference type="NCBIfam" id="NF003765">
    <property type="entry name" value="PRK05359.1"/>
    <property type="match status" value="1"/>
</dbReference>
<dbReference type="PANTHER" id="PTHR11046">
    <property type="entry name" value="OLIGORIBONUCLEASE, MITOCHONDRIAL"/>
    <property type="match status" value="1"/>
</dbReference>
<dbReference type="PANTHER" id="PTHR11046:SF0">
    <property type="entry name" value="OLIGORIBONUCLEASE, MITOCHONDRIAL"/>
    <property type="match status" value="1"/>
</dbReference>
<dbReference type="Pfam" id="PF00929">
    <property type="entry name" value="RNase_T"/>
    <property type="match status" value="1"/>
</dbReference>
<dbReference type="SMART" id="SM00479">
    <property type="entry name" value="EXOIII"/>
    <property type="match status" value="1"/>
</dbReference>
<dbReference type="SUPFAM" id="SSF53098">
    <property type="entry name" value="Ribonuclease H-like"/>
    <property type="match status" value="1"/>
</dbReference>
<keyword id="KW-0963">Cytoplasm</keyword>
<keyword id="KW-0269">Exonuclease</keyword>
<keyword id="KW-0378">Hydrolase</keyword>
<keyword id="KW-0540">Nuclease</keyword>
<sequence>MRDELVWIDCEMTGLDLRSDLLIEIAVLVTDADLNILGDGLDVVIHAPDEALDAMIPVVTEMHTRSGLIEEVRASTVDLATAEEMVLDYIRGHVKQAKTAPLAGNSIATDRGFIARDMAKLDDYLHYRMIDVSSIKELCRRWYPRIYFGQPEKGLAHRALADIHESIRELKYYRQTAFVAPPGPSTSDIAAIAAELGPPGKDAADTDSAAGHTTG</sequence>
<evidence type="ECO:0000255" key="1">
    <source>
        <dbReference type="HAMAP-Rule" id="MF_00045"/>
    </source>
</evidence>
<evidence type="ECO:0000256" key="2">
    <source>
        <dbReference type="SAM" id="MobiDB-lite"/>
    </source>
</evidence>